<sequence length="1043" mass="117686">MRRFKRKHLTAIDCQHLARSHLAVTQPFGQRWTNRDPNHGLYPKPRTKRGSRGQGSQRCIPEFFLAGKQPCTNDMAKSNSVGQDSCQDSEGDMIFPAESSCALPQEGSAGPGSPGSAPPSRKRSWSSEEESNQATGTSRWDGVSKKAPRHHLSVPCTRPREARQEAEDSTSRLSAESGETDQDAGDVGPDPIPDSYYGLLGTLPCQEALSHICSLPSEVLRHVFAFLPVEDLYWNLSLVCHLWREIISDPLFIPWKKLYHRYLMNEEQAVSKVDGILSNCGIEKESDLCVLNLIRYTATTKCSPSVDPERVLWSLRDHPLLPEAEACVRQHLPDLYAAAGGVNIWALVAAVVLLSSSVNDIQRLLFCLRRPSSTVTMPDVTETLYCIAVLLYAMREKGINISNRIHYNIFYCLYLQENSCTQATKVKEEPSVWPGKKTIQLTHEQQLILNHKMEPLQVVKIMAFAGTGKTSTLVKYAEKWSQSRFLYVTFNKSIAKQAERVFPSNVICKTFHSMAYGHIGRKYQSKKKLNLFKLTPFMVNSVLAEGKGGFIRAKLVCKTLENFFASADEELTIDHVPIWCKNSQGQRVMVEQSEKLNGVLEASRLWDNMRKLGECTEEAHQMTHDGYLKLWQLSKPSLASFDAIFVDEAQDCTPAIMNIVLSQPCGKIFVGDPHQQIYTFRGAVNALFTVPHTHVFYLTQSFRFGVEIAYVGATILDVCKRVRKKTLVGGNHQSGIRGDAKGQVALLSRTNANVFDEAVRVTEGEFPSRIHLIGGIKSFGLDRIIDIWILLQPEEERRKQNLVIKDKFIRRWVHKEGFSGFKRYVTAAEDKELEAKIAVVEKYNIRIPELVQRIEKCHIEDLDFAEYILGTVHKAKGLEFDTVHVLDDFVKVPCARHNLPQLPHFRVESFSEDEWNLLYVAVTRAKKRLIMTKSLENILTLAGEYFLQAELTSNVLKTGVVRCCVGQCNNAIPVDTVLTMKKLPITYSNRKENKGGYLCHSCAEQRIGPLAFLTASPEQVRAMERTVENIVLPRHEALLFLVF</sequence>
<keyword id="KW-0002">3D-structure</keyword>
<keyword id="KW-0025">Alternative splicing</keyword>
<keyword id="KW-0067">ATP-binding</keyword>
<keyword id="KW-0158">Chromosome</keyword>
<keyword id="KW-0227">DNA damage</keyword>
<keyword id="KW-0234">DNA repair</keyword>
<keyword id="KW-0238">DNA-binding</keyword>
<keyword id="KW-0347">Helicase</keyword>
<keyword id="KW-0378">Hydrolase</keyword>
<keyword id="KW-0413">Isomerase</keyword>
<keyword id="KW-0547">Nucleotide-binding</keyword>
<keyword id="KW-0539">Nucleus</keyword>
<keyword id="KW-0597">Phosphoprotein</keyword>
<keyword id="KW-1267">Proteomics identification</keyword>
<keyword id="KW-1185">Reference proteome</keyword>
<keyword id="KW-0832">Ubl conjugation</keyword>
<keyword id="KW-0833">Ubl conjugation pathway</keyword>
<organism>
    <name type="scientific">Homo sapiens</name>
    <name type="common">Human</name>
    <dbReference type="NCBI Taxonomy" id="9606"/>
    <lineage>
        <taxon>Eukaryota</taxon>
        <taxon>Metazoa</taxon>
        <taxon>Chordata</taxon>
        <taxon>Craniata</taxon>
        <taxon>Vertebrata</taxon>
        <taxon>Euteleostomi</taxon>
        <taxon>Mammalia</taxon>
        <taxon>Eutheria</taxon>
        <taxon>Euarchontoglires</taxon>
        <taxon>Primates</taxon>
        <taxon>Haplorrhini</taxon>
        <taxon>Catarrhini</taxon>
        <taxon>Hominidae</taxon>
        <taxon>Homo</taxon>
    </lineage>
</organism>
<evidence type="ECO:0000255" key="1">
    <source>
        <dbReference type="PROSITE-ProRule" id="PRU00080"/>
    </source>
</evidence>
<evidence type="ECO:0000255" key="2">
    <source>
        <dbReference type="PROSITE-ProRule" id="PRU00560"/>
    </source>
</evidence>
<evidence type="ECO:0000256" key="3">
    <source>
        <dbReference type="SAM" id="MobiDB-lite"/>
    </source>
</evidence>
<evidence type="ECO:0000269" key="4">
    <source>
    </source>
</evidence>
<evidence type="ECO:0000269" key="5">
    <source>
    </source>
</evidence>
<evidence type="ECO:0000269" key="6">
    <source>
    </source>
</evidence>
<evidence type="ECO:0000269" key="7">
    <source>
    </source>
</evidence>
<evidence type="ECO:0000269" key="8">
    <source>
    </source>
</evidence>
<evidence type="ECO:0000269" key="9">
    <source>
    </source>
</evidence>
<evidence type="ECO:0000269" key="10">
    <source>
    </source>
</evidence>
<evidence type="ECO:0000269" key="11">
    <source>
    </source>
</evidence>
<evidence type="ECO:0000269" key="12">
    <source>
    </source>
</evidence>
<evidence type="ECO:0000269" key="13">
    <source>
    </source>
</evidence>
<evidence type="ECO:0000303" key="14">
    <source>
    </source>
</evidence>
<evidence type="ECO:0000303" key="15">
    <source>
    </source>
</evidence>
<evidence type="ECO:0000305" key="16"/>
<evidence type="ECO:0000312" key="17">
    <source>
        <dbReference type="HGNC" id="HGNC:13620"/>
    </source>
</evidence>
<evidence type="ECO:0007744" key="18">
    <source>
    </source>
</evidence>
<evidence type="ECO:0007829" key="19">
    <source>
        <dbReference type="PDB" id="8F5Q"/>
    </source>
</evidence>
<comment type="function">
    <text evidence="4 5 6 7 8 12 13">3'-5' DNA helicase and substrate-recognition component of the SCF(FBH1) E3 ubiquitin ligase complex that plays a key role in response to stalled/damaged replication forks (PubMed:11956208, PubMed:23393192). Involved in genome maintenance by acting as an anti-recombinogenic helicase and preventing extensive strand exchange during homologous recombination: promotes RAD51 filament dissolution from stalled forks, thereby inhibiting homologous recombination and preventing excessive recombination (PubMed:17724085, PubMed:19736316). Also promotes cell death and DNA double-strand breakage in response to replication stress: together with MUS81, promotes the endonucleolytic DNA cleavage following prolonged replication stress via its helicase activity, possibly to eliminate cells with excessive replication stress (PubMed:23319600, PubMed:23361013). Plays a major role in remodeling of stalled DNA forks by catalyzing fork regression, in which the fork reverses and the two nascent DNA strands anneal (PubMed:25772361). In addition to the helicase activity, also acts as the substrate-recognition component of the SCF(FBH1) E3 ubiquitin ligase complex, a complex that mediates ubiquitination of RAD51, leading to regulate RAD51 subcellular location (PubMed:25585578).</text>
</comment>
<comment type="catalytic activity">
    <reaction evidence="4 9">
        <text>Couples ATP hydrolysis with the unwinding of duplex DNA by translocating in the 3'-5' direction.</text>
        <dbReference type="EC" id="5.6.2.4"/>
    </reaction>
</comment>
<comment type="catalytic activity">
    <reaction evidence="4 9">
        <text>ATP + H2O = ADP + phosphate + H(+)</text>
        <dbReference type="Rhea" id="RHEA:13065"/>
        <dbReference type="ChEBI" id="CHEBI:15377"/>
        <dbReference type="ChEBI" id="CHEBI:15378"/>
        <dbReference type="ChEBI" id="CHEBI:30616"/>
        <dbReference type="ChEBI" id="CHEBI:43474"/>
        <dbReference type="ChEBI" id="CHEBI:456216"/>
        <dbReference type="EC" id="5.6.2.4"/>
    </reaction>
</comment>
<comment type="pathway">
    <text evidence="12">Protein modification; protein ubiquitination.</text>
</comment>
<comment type="subunit">
    <text evidence="4 6 7 9 11">Part of the SCF (SKP1-CUL1-F-box) E3 ubiquitin-protein ligase complex SCF(FBH1) composed of CUL1, SKP1, RBX1 and FBH1 (PubMed:11956208, PubMed:19736316, PubMed:23319600). Interacts with RAD51 (PubMed:23393192). Interacts with RPA2 (PubMed:23319600). Interacts (via PIP-box and RanBP2-type zinc finger) with PCNA (PubMed:23677613).</text>
</comment>
<comment type="interaction">
    <interactant intactId="EBI-724767">
        <id>Q8NFZ0</id>
    </interactant>
    <interactant intactId="EBI-13307975">
        <id>O00213-2</id>
        <label>APBB1</label>
    </interactant>
    <organismsDiffer>false</organismsDiffer>
    <experiments>3</experiments>
</comment>
<comment type="interaction">
    <interactant intactId="EBI-724767">
        <id>Q8NFZ0</id>
    </interactant>
    <interactant intactId="EBI-747754">
        <id>P28799</id>
        <label>GRN</label>
    </interactant>
    <organismsDiffer>false</organismsDiffer>
    <experiments>3</experiments>
</comment>
<comment type="interaction">
    <interactant intactId="EBI-724767">
        <id>Q8NFZ0</id>
    </interactant>
    <interactant intactId="EBI-466029">
        <id>P42858</id>
        <label>HTT</label>
    </interactant>
    <organismsDiffer>false</organismsDiffer>
    <experiments>6</experiments>
</comment>
<comment type="interaction">
    <interactant intactId="EBI-724767">
        <id>Q8NFZ0</id>
    </interactant>
    <interactant intactId="EBI-621482">
        <id>P12931</id>
        <label>SRC</label>
    </interactant>
    <organismsDiffer>false</organismsDiffer>
    <experiments>4</experiments>
</comment>
<comment type="interaction">
    <interactant intactId="EBI-724767">
        <id>Q8NFZ0</id>
    </interactant>
    <interactant intactId="EBI-720609">
        <id>O76024</id>
        <label>WFS1</label>
    </interactant>
    <organismsDiffer>false</organismsDiffer>
    <experiments>3</experiments>
</comment>
<comment type="subcellular location">
    <subcellularLocation>
        <location evidence="6 11">Nucleus</location>
    </subcellularLocation>
    <subcellularLocation>
        <location evidence="6 7 11">Chromosome</location>
    </subcellularLocation>
    <text evidence="6 11">Accumulates at sites of DNA damage or replication stress (PubMed:19736316, PubMed:23677613). PCNA is required for localization to DNA damage sites (PubMed:23677613). Localizes to the nucleoplasm in absence of DNA damage (PubMed:23677613).</text>
</comment>
<comment type="alternative products">
    <event type="alternative splicing"/>
    <isoform>
        <id>Q8NFZ0-1</id>
        <name>1</name>
        <sequence type="displayed"/>
    </isoform>
    <isoform>
        <id>Q8NFZ0-2</id>
        <name>2</name>
        <sequence type="described" ref="VSP_037942"/>
    </isoform>
</comment>
<comment type="domain">
    <text evidence="11">The PIP-box mediates the interaction with PCNA.</text>
</comment>
<comment type="PTM">
    <text evidence="9 11">Ubiquitinated (PubMed:23393192, PubMed:23677613). Ubiquitination by the DCX(DTL) complex, also named CRL4(CDT2), leading to its degradation: ubiquitination takes place after its localization to DNA damage sites, possibly to facilitate the translesion synthesis (TLS) pathway (PubMed:23677613).</text>
</comment>
<comment type="disease">
    <text evidence="10">Defects in FBH1 are frequently observed in melanomas, resulting in increased survival in response to replicative stress. Its inactivation may play a role in oncogenic transformation.</text>
</comment>
<comment type="similarity">
    <text evidence="16">Belongs to the helicase family. UvrD subfamily.</text>
</comment>
<comment type="sequence caution" evidence="16">
    <conflict type="erroneous initiation">
        <sequence resource="EMBL-CDS" id="AAM73631"/>
    </conflict>
    <text>Truncated N-terminus.</text>
</comment>
<comment type="sequence caution" evidence="16">
    <conflict type="erroneous initiation">
        <sequence resource="EMBL-CDS" id="BAB55073"/>
    </conflict>
    <text>Truncated N-terminus.</text>
</comment>
<comment type="sequence caution" evidence="16">
    <conflict type="erroneous initiation">
        <sequence resource="EMBL-CDS" id="BAB55154"/>
    </conflict>
    <text>Truncated N-terminus.</text>
</comment>
<proteinExistence type="evidence at protein level"/>
<protein>
    <recommendedName>
        <fullName evidence="14">F-box DNA helicase 1</fullName>
        <shortName evidence="14 15">hFBH1</shortName>
        <ecNumber evidence="4 9">5.6.2.4</ecNumber>
    </recommendedName>
    <alternativeName>
        <fullName evidence="16">DNA 3'-5' helicase 1</fullName>
    </alternativeName>
    <alternativeName>
        <fullName evidence="17">F-box only protein 18</fullName>
    </alternativeName>
</protein>
<gene>
    <name evidence="17" type="primary">FBH1</name>
    <name type="synonym">FBX18</name>
    <name type="synonym">FBXO18</name>
</gene>
<name>FBH1_HUMAN</name>
<accession>Q8NFZ0</accession>
<accession>Q5JVB0</accession>
<accession>Q5JVB1</accession>
<accession>Q7Z4Q6</accession>
<accession>Q7Z4R0</accession>
<accession>Q8N1P5</accession>
<accession>Q8N586</accession>
<accession>Q96E82</accession>
<accession>Q96K67</accession>
<accession>Q96SW7</accession>
<accession>Q9UFB2</accession>
<reference key="1">
    <citation type="journal article" date="2002" name="J. Biol. Chem.">
        <title>The novel human DNA helicase hFBH1 is an F-box protein.</title>
        <authorList>
            <person name="Kim J."/>
            <person name="Kim J.-H."/>
            <person name="Lee S.-H."/>
            <person name="Kim D.-H."/>
            <person name="Kang H.-Y."/>
            <person name="Bae S.-H."/>
            <person name="Pan Z.-Q."/>
            <person name="Seo Y.-S."/>
        </authorList>
    </citation>
    <scope>NUCLEOTIDE SEQUENCE [MRNA] (ISOFORM 2)</scope>
    <scope>FUNCTION</scope>
    <scope>CATALYTIC ACTIVITY</scope>
    <scope>INTERACTION WITH SKP1</scope>
    <scope>IDENTIFICATION IN SCF COMPLEX</scope>
</reference>
<reference key="2">
    <citation type="submission" date="2001-12" db="EMBL/GenBank/DDBJ databases">
        <authorList>
            <person name="Zan Q."/>
            <person name="Guo J.H."/>
            <person name="Yu L."/>
        </authorList>
    </citation>
    <scope>NUCLEOTIDE SEQUENCE [LARGE SCALE MRNA] (ISOFORM 1)</scope>
    <source>
        <tissue>Choriocarcinoma</tissue>
        <tissue>Testis</tissue>
    </source>
</reference>
<reference key="3">
    <citation type="journal article" date="2004" name="Nat. Genet.">
        <title>Complete sequencing and characterization of 21,243 full-length human cDNAs.</title>
        <authorList>
            <person name="Ota T."/>
            <person name="Suzuki Y."/>
            <person name="Nishikawa T."/>
            <person name="Otsuki T."/>
            <person name="Sugiyama T."/>
            <person name="Irie R."/>
            <person name="Wakamatsu A."/>
            <person name="Hayashi K."/>
            <person name="Sato H."/>
            <person name="Nagai K."/>
            <person name="Kimura K."/>
            <person name="Makita H."/>
            <person name="Sekine M."/>
            <person name="Obayashi M."/>
            <person name="Nishi T."/>
            <person name="Shibahara T."/>
            <person name="Tanaka T."/>
            <person name="Ishii S."/>
            <person name="Yamamoto J."/>
            <person name="Saito K."/>
            <person name="Kawai Y."/>
            <person name="Isono Y."/>
            <person name="Nakamura Y."/>
            <person name="Nagahari K."/>
            <person name="Murakami K."/>
            <person name="Yasuda T."/>
            <person name="Iwayanagi T."/>
            <person name="Wagatsuma M."/>
            <person name="Shiratori A."/>
            <person name="Sudo H."/>
            <person name="Hosoiri T."/>
            <person name="Kaku Y."/>
            <person name="Kodaira H."/>
            <person name="Kondo H."/>
            <person name="Sugawara M."/>
            <person name="Takahashi M."/>
            <person name="Kanda K."/>
            <person name="Yokoi T."/>
            <person name="Furuya T."/>
            <person name="Kikkawa E."/>
            <person name="Omura Y."/>
            <person name="Abe K."/>
            <person name="Kamihara K."/>
            <person name="Katsuta N."/>
            <person name="Sato K."/>
            <person name="Tanikawa M."/>
            <person name="Yamazaki M."/>
            <person name="Ninomiya K."/>
            <person name="Ishibashi T."/>
            <person name="Yamashita H."/>
            <person name="Murakawa K."/>
            <person name="Fujimori K."/>
            <person name="Tanai H."/>
            <person name="Kimata M."/>
            <person name="Watanabe M."/>
            <person name="Hiraoka S."/>
            <person name="Chiba Y."/>
            <person name="Ishida S."/>
            <person name="Ono Y."/>
            <person name="Takiguchi S."/>
            <person name="Watanabe S."/>
            <person name="Yosida M."/>
            <person name="Hotuta T."/>
            <person name="Kusano J."/>
            <person name="Kanehori K."/>
            <person name="Takahashi-Fujii A."/>
            <person name="Hara H."/>
            <person name="Tanase T.-O."/>
            <person name="Nomura Y."/>
            <person name="Togiya S."/>
            <person name="Komai F."/>
            <person name="Hara R."/>
            <person name="Takeuchi K."/>
            <person name="Arita M."/>
            <person name="Imose N."/>
            <person name="Musashino K."/>
            <person name="Yuuki H."/>
            <person name="Oshima A."/>
            <person name="Sasaki N."/>
            <person name="Aotsuka S."/>
            <person name="Yoshikawa Y."/>
            <person name="Matsunawa H."/>
            <person name="Ichihara T."/>
            <person name="Shiohata N."/>
            <person name="Sano S."/>
            <person name="Moriya S."/>
            <person name="Momiyama H."/>
            <person name="Satoh N."/>
            <person name="Takami S."/>
            <person name="Terashima Y."/>
            <person name="Suzuki O."/>
            <person name="Nakagawa S."/>
            <person name="Senoh A."/>
            <person name="Mizoguchi H."/>
            <person name="Goto Y."/>
            <person name="Shimizu F."/>
            <person name="Wakebe H."/>
            <person name="Hishigaki H."/>
            <person name="Watanabe T."/>
            <person name="Sugiyama A."/>
            <person name="Takemoto M."/>
            <person name="Kawakami B."/>
            <person name="Yamazaki M."/>
            <person name="Watanabe K."/>
            <person name="Kumagai A."/>
            <person name="Itakura S."/>
            <person name="Fukuzumi Y."/>
            <person name="Fujimori Y."/>
            <person name="Komiyama M."/>
            <person name="Tashiro H."/>
            <person name="Tanigami A."/>
            <person name="Fujiwara T."/>
            <person name="Ono T."/>
            <person name="Yamada K."/>
            <person name="Fujii Y."/>
            <person name="Ozaki K."/>
            <person name="Hirao M."/>
            <person name="Ohmori Y."/>
            <person name="Kawabata A."/>
            <person name="Hikiji T."/>
            <person name="Kobatake N."/>
            <person name="Inagaki H."/>
            <person name="Ikema Y."/>
            <person name="Okamoto S."/>
            <person name="Okitani R."/>
            <person name="Kawakami T."/>
            <person name="Noguchi S."/>
            <person name="Itoh T."/>
            <person name="Shigeta K."/>
            <person name="Senba T."/>
            <person name="Matsumura K."/>
            <person name="Nakajima Y."/>
            <person name="Mizuno T."/>
            <person name="Morinaga M."/>
            <person name="Sasaki M."/>
            <person name="Togashi T."/>
            <person name="Oyama M."/>
            <person name="Hata H."/>
            <person name="Watanabe M."/>
            <person name="Komatsu T."/>
            <person name="Mizushima-Sugano J."/>
            <person name="Satoh T."/>
            <person name="Shirai Y."/>
            <person name="Takahashi Y."/>
            <person name="Nakagawa K."/>
            <person name="Okumura K."/>
            <person name="Nagase T."/>
            <person name="Nomura N."/>
            <person name="Kikuchi H."/>
            <person name="Masuho Y."/>
            <person name="Yamashita R."/>
            <person name="Nakai K."/>
            <person name="Yada T."/>
            <person name="Nakamura Y."/>
            <person name="Ohara O."/>
            <person name="Isogai T."/>
            <person name="Sugano S."/>
        </authorList>
    </citation>
    <scope>NUCLEOTIDE SEQUENCE [LARGE SCALE MRNA] (ISOFORM 1)</scope>
    <source>
        <tissue>Mammary gland</tissue>
        <tissue>Testis carcinoma</tissue>
        <tissue>Tongue</tissue>
    </source>
</reference>
<reference key="4">
    <citation type="journal article" date="2004" name="Nature">
        <title>The DNA sequence and comparative analysis of human chromosome 10.</title>
        <authorList>
            <person name="Deloukas P."/>
            <person name="Earthrowl M.E."/>
            <person name="Grafham D.V."/>
            <person name="Rubenfield M."/>
            <person name="French L."/>
            <person name="Steward C.A."/>
            <person name="Sims S.K."/>
            <person name="Jones M.C."/>
            <person name="Searle S."/>
            <person name="Scott C."/>
            <person name="Howe K."/>
            <person name="Hunt S.E."/>
            <person name="Andrews T.D."/>
            <person name="Gilbert J.G.R."/>
            <person name="Swarbreck D."/>
            <person name="Ashurst J.L."/>
            <person name="Taylor A."/>
            <person name="Battles J."/>
            <person name="Bird C.P."/>
            <person name="Ainscough R."/>
            <person name="Almeida J.P."/>
            <person name="Ashwell R.I.S."/>
            <person name="Ambrose K.D."/>
            <person name="Babbage A.K."/>
            <person name="Bagguley C.L."/>
            <person name="Bailey J."/>
            <person name="Banerjee R."/>
            <person name="Bates K."/>
            <person name="Beasley H."/>
            <person name="Bray-Allen S."/>
            <person name="Brown A.J."/>
            <person name="Brown J.Y."/>
            <person name="Burford D.C."/>
            <person name="Burrill W."/>
            <person name="Burton J."/>
            <person name="Cahill P."/>
            <person name="Camire D."/>
            <person name="Carter N.P."/>
            <person name="Chapman J.C."/>
            <person name="Clark S.Y."/>
            <person name="Clarke G."/>
            <person name="Clee C.M."/>
            <person name="Clegg S."/>
            <person name="Corby N."/>
            <person name="Coulson A."/>
            <person name="Dhami P."/>
            <person name="Dutta I."/>
            <person name="Dunn M."/>
            <person name="Faulkner L."/>
            <person name="Frankish A."/>
            <person name="Frankland J.A."/>
            <person name="Garner P."/>
            <person name="Garnett J."/>
            <person name="Gribble S."/>
            <person name="Griffiths C."/>
            <person name="Grocock R."/>
            <person name="Gustafson E."/>
            <person name="Hammond S."/>
            <person name="Harley J.L."/>
            <person name="Hart E."/>
            <person name="Heath P.D."/>
            <person name="Ho T.P."/>
            <person name="Hopkins B."/>
            <person name="Horne J."/>
            <person name="Howden P.J."/>
            <person name="Huckle E."/>
            <person name="Hynds C."/>
            <person name="Johnson C."/>
            <person name="Johnson D."/>
            <person name="Kana A."/>
            <person name="Kay M."/>
            <person name="Kimberley A.M."/>
            <person name="Kershaw J.K."/>
            <person name="Kokkinaki M."/>
            <person name="Laird G.K."/>
            <person name="Lawlor S."/>
            <person name="Lee H.M."/>
            <person name="Leongamornlert D.A."/>
            <person name="Laird G."/>
            <person name="Lloyd C."/>
            <person name="Lloyd D.M."/>
            <person name="Loveland J."/>
            <person name="Lovell J."/>
            <person name="McLaren S."/>
            <person name="McLay K.E."/>
            <person name="McMurray A."/>
            <person name="Mashreghi-Mohammadi M."/>
            <person name="Matthews L."/>
            <person name="Milne S."/>
            <person name="Nickerson T."/>
            <person name="Nguyen M."/>
            <person name="Overton-Larty E."/>
            <person name="Palmer S.A."/>
            <person name="Pearce A.V."/>
            <person name="Peck A.I."/>
            <person name="Pelan S."/>
            <person name="Phillimore B."/>
            <person name="Porter K."/>
            <person name="Rice C.M."/>
            <person name="Rogosin A."/>
            <person name="Ross M.T."/>
            <person name="Sarafidou T."/>
            <person name="Sehra H.K."/>
            <person name="Shownkeen R."/>
            <person name="Skuce C.D."/>
            <person name="Smith M."/>
            <person name="Standring L."/>
            <person name="Sycamore N."/>
            <person name="Tester J."/>
            <person name="Thorpe A."/>
            <person name="Torcasso W."/>
            <person name="Tracey A."/>
            <person name="Tromans A."/>
            <person name="Tsolas J."/>
            <person name="Wall M."/>
            <person name="Walsh J."/>
            <person name="Wang H."/>
            <person name="Weinstock K."/>
            <person name="West A.P."/>
            <person name="Willey D.L."/>
            <person name="Whitehead S.L."/>
            <person name="Wilming L."/>
            <person name="Wray P.W."/>
            <person name="Young L."/>
            <person name="Chen Y."/>
            <person name="Lovering R.C."/>
            <person name="Moschonas N.K."/>
            <person name="Siebert R."/>
            <person name="Fechtel K."/>
            <person name="Bentley D."/>
            <person name="Durbin R.M."/>
            <person name="Hubbard T."/>
            <person name="Doucette-Stamm L."/>
            <person name="Beck S."/>
            <person name="Smith D.R."/>
            <person name="Rogers J."/>
        </authorList>
    </citation>
    <scope>NUCLEOTIDE SEQUENCE [LARGE SCALE GENOMIC DNA]</scope>
</reference>
<reference key="5">
    <citation type="submission" date="2005-09" db="EMBL/GenBank/DDBJ databases">
        <authorList>
            <person name="Mural R.J."/>
            <person name="Istrail S."/>
            <person name="Sutton G.G."/>
            <person name="Florea L."/>
            <person name="Halpern A.L."/>
            <person name="Mobarry C.M."/>
            <person name="Lippert R."/>
            <person name="Walenz B."/>
            <person name="Shatkay H."/>
            <person name="Dew I."/>
            <person name="Miller J.R."/>
            <person name="Flanigan M.J."/>
            <person name="Edwards N.J."/>
            <person name="Bolanos R."/>
            <person name="Fasulo D."/>
            <person name="Halldorsson B.V."/>
            <person name="Hannenhalli S."/>
            <person name="Turner R."/>
            <person name="Yooseph S."/>
            <person name="Lu F."/>
            <person name="Nusskern D.R."/>
            <person name="Shue B.C."/>
            <person name="Zheng X.H."/>
            <person name="Zhong F."/>
            <person name="Delcher A.L."/>
            <person name="Huson D.H."/>
            <person name="Kravitz S.A."/>
            <person name="Mouchard L."/>
            <person name="Reinert K."/>
            <person name="Remington K.A."/>
            <person name="Clark A.G."/>
            <person name="Waterman M.S."/>
            <person name="Eichler E.E."/>
            <person name="Adams M.D."/>
            <person name="Hunkapiller M.W."/>
            <person name="Myers E.W."/>
            <person name="Venter J.C."/>
        </authorList>
    </citation>
    <scope>NUCLEOTIDE SEQUENCE [LARGE SCALE GENOMIC DNA]</scope>
</reference>
<reference key="6">
    <citation type="journal article" date="2004" name="Genome Res.">
        <title>The status, quality, and expansion of the NIH full-length cDNA project: the Mammalian Gene Collection (MGC).</title>
        <authorList>
            <consortium name="The MGC Project Team"/>
        </authorList>
    </citation>
    <scope>NUCLEOTIDE SEQUENCE [LARGE SCALE MRNA] (ISOFORM 1)</scope>
    <source>
        <tissue>Brain</tissue>
        <tissue>Pancreas</tissue>
        <tissue>Testis</tissue>
    </source>
</reference>
<reference key="7">
    <citation type="journal article" date="2007" name="BMC Genomics">
        <title>The full-ORF clone resource of the German cDNA consortium.</title>
        <authorList>
            <person name="Bechtel S."/>
            <person name="Rosenfelder H."/>
            <person name="Duda A."/>
            <person name="Schmidt C.P."/>
            <person name="Ernst U."/>
            <person name="Wellenreuther R."/>
            <person name="Mehrle A."/>
            <person name="Schuster C."/>
            <person name="Bahr A."/>
            <person name="Bloecker H."/>
            <person name="Heubner D."/>
            <person name="Hoerlein A."/>
            <person name="Michel G."/>
            <person name="Wedler H."/>
            <person name="Koehrer K."/>
            <person name="Ottenwaelder B."/>
            <person name="Poustka A."/>
            <person name="Wiemann S."/>
            <person name="Schupp I."/>
        </authorList>
    </citation>
    <scope>NUCLEOTIDE SEQUENCE [LARGE SCALE MRNA] OF 763-1043 (ISOFORMS 1/2)</scope>
    <source>
        <tissue>Testis</tissue>
    </source>
</reference>
<reference key="8">
    <citation type="journal article" date="2007" name="Mol. Cell. Biol.">
        <title>The human F-Box DNA helicase FBH1 faces Saccharomyces cerevisiae Srs2 and postreplication repair pathway roles.</title>
        <authorList>
            <person name="Chiolo I."/>
            <person name="Saponaro M."/>
            <person name="Baryshnikova A."/>
            <person name="Kim J.H."/>
            <person name="Seo Y.S."/>
            <person name="Liberi G."/>
        </authorList>
    </citation>
    <scope>FUNCTION</scope>
</reference>
<reference key="9">
    <citation type="journal article" date="2009" name="J. Cell Biol.">
        <title>Human Fbh1 helicase contributes to genome maintenance via pro- and anti-recombinase activities.</title>
        <authorList>
            <person name="Fugger K."/>
            <person name="Mistrik M."/>
            <person name="Danielsen J.R."/>
            <person name="Dinant C."/>
            <person name="Falck J."/>
            <person name="Bartek J."/>
            <person name="Lukas J."/>
            <person name="Mailand N."/>
        </authorList>
    </citation>
    <scope>FUNCTION</scope>
    <scope>SUBCELLULAR LOCATION</scope>
    <scope>IDENTIFICATION IN SCF COMPLEX</scope>
    <scope>MUTAGENESIS OF 227-LEU-PRO-228 AND ASP-647</scope>
</reference>
<reference key="10">
    <citation type="journal article" date="2013" name="Cell Cycle">
        <title>FBH1 protects melanocytes from transformation and is deregulated in melanomas.</title>
        <authorList>
            <person name="Jeong Y.T."/>
            <person name="Cermak L."/>
            <person name="Guijarro M.V."/>
            <person name="Hernando E."/>
            <person name="Pagano M."/>
        </authorList>
    </citation>
    <scope>POSSIBLE INVOLVEMENT IN MELANOMAS</scope>
</reference>
<reference key="11">
    <citation type="journal article" date="2013" name="J. Cell Biol.">
        <title>FBH1 promotes DNA double-strand breakage and apoptosis in response to DNA replication stress.</title>
        <authorList>
            <person name="Jeong Y.T."/>
            <person name="Rossi M."/>
            <person name="Cermak L."/>
            <person name="Saraf A."/>
            <person name="Florens L."/>
            <person name="Washburn M.P."/>
            <person name="Sung P."/>
            <person name="Schildkraut C.L."/>
            <person name="Schildkraut C."/>
            <person name="Pagano M."/>
        </authorList>
    </citation>
    <scope>FUNCTION</scope>
    <scope>SUBCELLULAR LOCATION</scope>
    <scope>IDENTIFICATION IN SCF COMPLEX</scope>
    <scope>INTERACTION WITH RPA2</scope>
    <scope>MUTAGENESIS OF SER-56; 227-LEU-PRO-228; SER-583 AND ASP-647</scope>
</reference>
<reference key="12">
    <citation type="journal article" date="2013" name="J. Proteome Res.">
        <title>Toward a comprehensive characterization of a human cancer cell phosphoproteome.</title>
        <authorList>
            <person name="Zhou H."/>
            <person name="Di Palma S."/>
            <person name="Preisinger C."/>
            <person name="Peng M."/>
            <person name="Polat A.N."/>
            <person name="Heck A.J."/>
            <person name="Mohammed S."/>
        </authorList>
    </citation>
    <scope>PHOSPHORYLATION [LARGE SCALE ANALYSIS] AT SER-124</scope>
    <scope>IDENTIFICATION BY MASS SPECTROMETRY [LARGE SCALE ANALYSIS]</scope>
    <source>
        <tissue>Erythroleukemia</tissue>
    </source>
</reference>
<reference key="13">
    <citation type="journal article" date="2013" name="Nat. Commun.">
        <title>FBH1 co-operates with MUS81 in inducing DNA double-strand breaks and cell death following replication stress.</title>
        <authorList>
            <person name="Fugger K."/>
            <person name="Chu W.K."/>
            <person name="Haahr P."/>
            <person name="Kousholt A.N."/>
            <person name="Beck H."/>
            <person name="Payne M.J."/>
            <person name="Hanada K."/>
            <person name="Hickson I.D."/>
            <person name="Sorensen C.S."/>
        </authorList>
    </citation>
    <scope>FUNCTION</scope>
</reference>
<reference key="14">
    <citation type="journal article" date="2013" name="Nucleic Acids Res.">
        <title>Single-molecule sorting reveals how ubiquitylation affects substrate recognition and activities of FBH1 helicase.</title>
        <authorList>
            <person name="Masuda-Ozawa T."/>
            <person name="Hoang T."/>
            <person name="Seo Y.S."/>
            <person name="Chen L.F."/>
            <person name="Spies M."/>
        </authorList>
    </citation>
    <scope>FUNCTION</scope>
    <scope>CATALYTIC ACTIVITY</scope>
    <scope>INTERACTION WITH RAD51</scope>
    <scope>UBIQUITINATION</scope>
</reference>
<reference key="15">
    <citation type="journal article" date="2013" name="Nucleic Acids Res.">
        <title>The helicase FBH1 is tightly regulated by PCNA via CRL4(Cdt2)-mediated proteolysis in human cells.</title>
        <authorList>
            <person name="Bacquin A."/>
            <person name="Pouvelle C."/>
            <person name="Siaud N."/>
            <person name="Perderiset M."/>
            <person name="Salome-Desnoulez S."/>
            <person name="Tellier-Lebegue C."/>
            <person name="Lopez B."/>
            <person name="Charbonnier J.B."/>
            <person name="Kannouche P.L."/>
        </authorList>
    </citation>
    <scope>UBIQUITINATION</scope>
    <scope>SUBCELLULAR LOCATION</scope>
    <scope>DOMAIN</scope>
    <scope>INTERACTION WITH PCNA</scope>
    <scope>MUTAGENESIS OF 60-ILE--PHE-64; 63-PHE-PHE-64 AND 807-LYS--ILE-809</scope>
</reference>
<reference key="16">
    <citation type="journal article" date="2015" name="Cell Rep.">
        <title>FBH1 catalyzes regression of stalled replication forks.</title>
        <authorList>
            <person name="Fugger K."/>
            <person name="Mistrik M."/>
            <person name="Neelsen K.J."/>
            <person name="Yao Q."/>
            <person name="Zellweger R."/>
            <person name="Kousholt A.N."/>
            <person name="Haahr P."/>
            <person name="Chu W.K."/>
            <person name="Bartek J."/>
            <person name="Lopes M."/>
            <person name="Hickson I.D."/>
            <person name="Soerensen C.S."/>
        </authorList>
    </citation>
    <scope>FUNCTION</scope>
    <scope>MUTAGENESIS OF ASP-647</scope>
</reference>
<reference key="17">
    <citation type="journal article" date="2015" name="Nat. Commun.">
        <title>FBH1 influences DNA replication fork stability and homologous recombination through ubiquitylation of RAD51.</title>
        <authorList>
            <person name="Chu W.K."/>
            <person name="Payne M.J."/>
            <person name="Beli P."/>
            <person name="Hanada K."/>
            <person name="Choudhary C."/>
            <person name="Hickson I.D."/>
        </authorList>
    </citation>
    <scope>FUNCTION</scope>
    <scope>PATHWAY</scope>
    <scope>IDENTIFICATION IN SCF COMPLEX</scope>
</reference>
<dbReference type="EC" id="5.6.2.4" evidence="4 9"/>
<dbReference type="EMBL" id="AF380349">
    <property type="protein sequence ID" value="AAM73631.1"/>
    <property type="status" value="ALT_INIT"/>
    <property type="molecule type" value="mRNA"/>
</dbReference>
<dbReference type="EMBL" id="AF454502">
    <property type="protein sequence ID" value="AAP97700.1"/>
    <property type="molecule type" value="mRNA"/>
</dbReference>
<dbReference type="EMBL" id="AF456237">
    <property type="protein sequence ID" value="AAP97705.1"/>
    <property type="molecule type" value="mRNA"/>
</dbReference>
<dbReference type="EMBL" id="AK027381">
    <property type="protein sequence ID" value="BAB55073.1"/>
    <property type="status" value="ALT_INIT"/>
    <property type="molecule type" value="mRNA"/>
</dbReference>
<dbReference type="EMBL" id="AK027496">
    <property type="protein sequence ID" value="BAB55154.1"/>
    <property type="status" value="ALT_INIT"/>
    <property type="molecule type" value="mRNA"/>
</dbReference>
<dbReference type="EMBL" id="AK095343">
    <property type="protein sequence ID" value="BAC04535.1"/>
    <property type="molecule type" value="mRNA"/>
</dbReference>
<dbReference type="EMBL" id="AL137186">
    <property type="status" value="NOT_ANNOTATED_CDS"/>
    <property type="molecule type" value="Genomic_DNA"/>
</dbReference>
<dbReference type="EMBL" id="CH471072">
    <property type="protein sequence ID" value="EAW86426.1"/>
    <property type="molecule type" value="Genomic_DNA"/>
</dbReference>
<dbReference type="EMBL" id="BC012762">
    <property type="protein sequence ID" value="AAH12762.2"/>
    <property type="molecule type" value="mRNA"/>
</dbReference>
<dbReference type="EMBL" id="BC032674">
    <property type="protein sequence ID" value="AAH32674.2"/>
    <property type="molecule type" value="mRNA"/>
</dbReference>
<dbReference type="EMBL" id="BC113377">
    <property type="protein sequence ID" value="AAI13378.1"/>
    <property type="molecule type" value="mRNA"/>
</dbReference>
<dbReference type="EMBL" id="AL133069">
    <property type="protein sequence ID" value="CAB61392.1"/>
    <property type="molecule type" value="mRNA"/>
</dbReference>
<dbReference type="CCDS" id="CCDS7072.1">
    <molecule id="Q8NFZ0-1"/>
</dbReference>
<dbReference type="CCDS" id="CCDS7073.1">
    <molecule id="Q8NFZ0-2"/>
</dbReference>
<dbReference type="PIR" id="T42669">
    <property type="entry name" value="T42669"/>
</dbReference>
<dbReference type="RefSeq" id="NP_001245381.1">
    <property type="nucleotide sequence ID" value="NM_001258452.1"/>
</dbReference>
<dbReference type="RefSeq" id="NP_001245382.1">
    <property type="nucleotide sequence ID" value="NM_001258453.1"/>
</dbReference>
<dbReference type="RefSeq" id="NP_116196.3">
    <molecule id="Q8NFZ0-2"/>
    <property type="nucleotide sequence ID" value="NM_032807.4"/>
</dbReference>
<dbReference type="RefSeq" id="NP_835363.1">
    <molecule id="Q8NFZ0-1"/>
    <property type="nucleotide sequence ID" value="NM_178150.3"/>
</dbReference>
<dbReference type="RefSeq" id="XP_011518050.1">
    <property type="nucleotide sequence ID" value="XM_011519748.2"/>
</dbReference>
<dbReference type="RefSeq" id="XP_047281851.1">
    <molecule id="Q8NFZ0-1"/>
    <property type="nucleotide sequence ID" value="XM_047425895.1"/>
</dbReference>
<dbReference type="RefSeq" id="XP_047281852.1">
    <molecule id="Q8NFZ0-1"/>
    <property type="nucleotide sequence ID" value="XM_047425896.1"/>
</dbReference>
<dbReference type="RefSeq" id="XP_054222981.1">
    <molecule id="Q8NFZ0-1"/>
    <property type="nucleotide sequence ID" value="XM_054367006.1"/>
</dbReference>
<dbReference type="RefSeq" id="XP_054222982.1">
    <molecule id="Q8NFZ0-1"/>
    <property type="nucleotide sequence ID" value="XM_054367007.1"/>
</dbReference>
<dbReference type="PDB" id="8F5Q">
    <property type="method" value="X-ray"/>
    <property type="resolution" value="1.90 A"/>
    <property type="chains" value="B/D/F=56-64"/>
</dbReference>
<dbReference type="PDBsum" id="8F5Q"/>
<dbReference type="SMR" id="Q8NFZ0"/>
<dbReference type="BioGRID" id="124333">
    <property type="interactions" value="32"/>
</dbReference>
<dbReference type="ComplexPortal" id="CPX-7928">
    <property type="entry name" value="SCF E3 ubiquitin ligase complex, FBH1 variant"/>
</dbReference>
<dbReference type="CORUM" id="Q8NFZ0"/>
<dbReference type="FunCoup" id="Q8NFZ0">
    <property type="interactions" value="2040"/>
</dbReference>
<dbReference type="IntAct" id="Q8NFZ0">
    <property type="interactions" value="23"/>
</dbReference>
<dbReference type="MINT" id="Q8NFZ0"/>
<dbReference type="STRING" id="9606.ENSP00000369335"/>
<dbReference type="GlyGen" id="Q8NFZ0">
    <property type="glycosylation" value="2 sites, 1 O-linked glycan (1 site)"/>
</dbReference>
<dbReference type="iPTMnet" id="Q8NFZ0"/>
<dbReference type="PhosphoSitePlus" id="Q8NFZ0"/>
<dbReference type="BioMuta" id="FBXO18"/>
<dbReference type="DMDM" id="45476952"/>
<dbReference type="jPOST" id="Q8NFZ0"/>
<dbReference type="MassIVE" id="Q8NFZ0"/>
<dbReference type="PaxDb" id="9606-ENSP00000369335"/>
<dbReference type="PeptideAtlas" id="Q8NFZ0"/>
<dbReference type="ProteomicsDB" id="73393">
    <molecule id="Q8NFZ0-1"/>
</dbReference>
<dbReference type="ProteomicsDB" id="73394">
    <molecule id="Q8NFZ0-2"/>
</dbReference>
<dbReference type="Pumba" id="Q8NFZ0"/>
<dbReference type="Antibodypedia" id="1236">
    <property type="antibodies" value="103 antibodies from 25 providers"/>
</dbReference>
<dbReference type="DNASU" id="84893"/>
<dbReference type="Ensembl" id="ENST00000362091.9">
    <molecule id="Q8NFZ0-1"/>
    <property type="protein sequence ID" value="ENSP00000355415.4"/>
    <property type="gene ID" value="ENSG00000134452.20"/>
</dbReference>
<dbReference type="Ensembl" id="ENST00000379999.6">
    <molecule id="Q8NFZ0-2"/>
    <property type="protein sequence ID" value="ENSP00000369335.5"/>
    <property type="gene ID" value="ENSG00000134452.20"/>
</dbReference>
<dbReference type="GeneID" id="84893"/>
<dbReference type="KEGG" id="hsa:84893"/>
<dbReference type="MANE-Select" id="ENST00000362091.9">
    <property type="protein sequence ID" value="ENSP00000355415.4"/>
    <property type="RefSeq nucleotide sequence ID" value="NM_178150.3"/>
    <property type="RefSeq protein sequence ID" value="NP_835363.1"/>
</dbReference>
<dbReference type="UCSC" id="uc001iis.5">
    <molecule id="Q8NFZ0-1"/>
    <property type="organism name" value="human"/>
</dbReference>
<dbReference type="AGR" id="HGNC:13620"/>
<dbReference type="CTD" id="84893"/>
<dbReference type="DisGeNET" id="84893"/>
<dbReference type="GeneCards" id="FBH1"/>
<dbReference type="HGNC" id="HGNC:13620">
    <property type="gene designation" value="FBH1"/>
</dbReference>
<dbReference type="HPA" id="ENSG00000134452">
    <property type="expression patterns" value="Low tissue specificity"/>
</dbReference>
<dbReference type="MalaCards" id="FBH1"/>
<dbReference type="MIM" id="607222">
    <property type="type" value="gene"/>
</dbReference>
<dbReference type="neXtProt" id="NX_Q8NFZ0"/>
<dbReference type="OpenTargets" id="ENSG00000134452"/>
<dbReference type="PharmGKB" id="PA134948258"/>
<dbReference type="VEuPathDB" id="HostDB:ENSG00000134452"/>
<dbReference type="eggNOG" id="KOG2108">
    <property type="taxonomic scope" value="Eukaryota"/>
</dbReference>
<dbReference type="GeneTree" id="ENSGT00390000011669"/>
<dbReference type="InParanoid" id="Q8NFZ0"/>
<dbReference type="OrthoDB" id="1470711at2759"/>
<dbReference type="PAN-GO" id="Q8NFZ0">
    <property type="GO annotations" value="3 GO annotations based on evolutionary models"/>
</dbReference>
<dbReference type="PhylomeDB" id="Q8NFZ0"/>
<dbReference type="TreeFam" id="TF329020"/>
<dbReference type="PathwayCommons" id="Q8NFZ0"/>
<dbReference type="SignaLink" id="Q8NFZ0"/>
<dbReference type="SIGNOR" id="Q8NFZ0"/>
<dbReference type="UniPathway" id="UPA00143"/>
<dbReference type="BioGRID-ORCS" id="84893">
    <property type="hits" value="9 hits in 1198 CRISPR screens"/>
</dbReference>
<dbReference type="ChiTaRS" id="FBXO18">
    <property type="organism name" value="human"/>
</dbReference>
<dbReference type="GenomeRNAi" id="84893"/>
<dbReference type="Pharos" id="Q8NFZ0">
    <property type="development level" value="Tbio"/>
</dbReference>
<dbReference type="PRO" id="PR:Q8NFZ0"/>
<dbReference type="Proteomes" id="UP000005640">
    <property type="component" value="Chromosome 10"/>
</dbReference>
<dbReference type="RNAct" id="Q8NFZ0">
    <property type="molecule type" value="protein"/>
</dbReference>
<dbReference type="Bgee" id="ENSG00000134452">
    <property type="expression patterns" value="Expressed in apex of heart and 177 other cell types or tissues"/>
</dbReference>
<dbReference type="ExpressionAtlas" id="Q8NFZ0">
    <property type="expression patterns" value="baseline and differential"/>
</dbReference>
<dbReference type="GO" id="GO:0000785">
    <property type="term" value="C:chromatin"/>
    <property type="evidence" value="ECO:0000314"/>
    <property type="project" value="UniProtKB"/>
</dbReference>
<dbReference type="GO" id="GO:0005634">
    <property type="term" value="C:nucleus"/>
    <property type="evidence" value="ECO:0000314"/>
    <property type="project" value="UniProtKB"/>
</dbReference>
<dbReference type="GO" id="GO:0019005">
    <property type="term" value="C:SCF ubiquitin ligase complex"/>
    <property type="evidence" value="ECO:0000314"/>
    <property type="project" value="UniProtKB"/>
</dbReference>
<dbReference type="GO" id="GO:0043138">
    <property type="term" value="F:3'-5' DNA helicase activity"/>
    <property type="evidence" value="ECO:0000314"/>
    <property type="project" value="UniProtKB"/>
</dbReference>
<dbReference type="GO" id="GO:0005524">
    <property type="term" value="F:ATP binding"/>
    <property type="evidence" value="ECO:0007669"/>
    <property type="project" value="UniProtKB-KW"/>
</dbReference>
<dbReference type="GO" id="GO:0016887">
    <property type="term" value="F:ATP hydrolysis activity"/>
    <property type="evidence" value="ECO:0007669"/>
    <property type="project" value="RHEA"/>
</dbReference>
<dbReference type="GO" id="GO:0003678">
    <property type="term" value="F:DNA helicase activity"/>
    <property type="evidence" value="ECO:0000314"/>
    <property type="project" value="UniProtKB"/>
</dbReference>
<dbReference type="GO" id="GO:0015616">
    <property type="term" value="F:DNA translocase activity"/>
    <property type="evidence" value="ECO:0000314"/>
    <property type="project" value="MGI"/>
</dbReference>
<dbReference type="GO" id="GO:0003690">
    <property type="term" value="F:double-stranded DNA binding"/>
    <property type="evidence" value="ECO:0000314"/>
    <property type="project" value="UniProtKB"/>
</dbReference>
<dbReference type="GO" id="GO:0003697">
    <property type="term" value="F:single-stranded DNA binding"/>
    <property type="evidence" value="ECO:0000314"/>
    <property type="project" value="UniProtKB"/>
</dbReference>
<dbReference type="GO" id="GO:0006308">
    <property type="term" value="P:DNA catabolic process"/>
    <property type="evidence" value="ECO:0000315"/>
    <property type="project" value="MGI"/>
</dbReference>
<dbReference type="GO" id="GO:0006974">
    <property type="term" value="P:DNA damage response"/>
    <property type="evidence" value="ECO:0000314"/>
    <property type="project" value="UniProtKB"/>
</dbReference>
<dbReference type="GO" id="GO:0006281">
    <property type="term" value="P:DNA repair"/>
    <property type="evidence" value="ECO:0000314"/>
    <property type="project" value="UniProtKB"/>
</dbReference>
<dbReference type="GO" id="GO:0000724">
    <property type="term" value="P:double-strand break repair via homologous recombination"/>
    <property type="evidence" value="ECO:0000250"/>
    <property type="project" value="UniProtKB"/>
</dbReference>
<dbReference type="GO" id="GO:2000042">
    <property type="term" value="P:negative regulation of double-strand break repair via homologous recombination"/>
    <property type="evidence" value="ECO:0000314"/>
    <property type="project" value="UniProtKB"/>
</dbReference>
<dbReference type="GO" id="GO:1902231">
    <property type="term" value="P:positive regulation of intrinsic apoptotic signaling pathway in response to DNA damage"/>
    <property type="evidence" value="ECO:0000315"/>
    <property type="project" value="MGI"/>
</dbReference>
<dbReference type="GO" id="GO:0001934">
    <property type="term" value="P:positive regulation of protein phosphorylation"/>
    <property type="evidence" value="ECO:0000315"/>
    <property type="project" value="MGI"/>
</dbReference>
<dbReference type="GO" id="GO:0016567">
    <property type="term" value="P:protein ubiquitination"/>
    <property type="evidence" value="ECO:0000314"/>
    <property type="project" value="UniProtKB"/>
</dbReference>
<dbReference type="GO" id="GO:0031297">
    <property type="term" value="P:replication fork processing"/>
    <property type="evidence" value="ECO:0000314"/>
    <property type="project" value="UniProtKB"/>
</dbReference>
<dbReference type="GO" id="GO:0072429">
    <property type="term" value="P:response to intra-S DNA damage checkpoint signaling"/>
    <property type="evidence" value="ECO:0000315"/>
    <property type="project" value="MGI"/>
</dbReference>
<dbReference type="CDD" id="cd22095">
    <property type="entry name" value="F-box_FBXO18"/>
    <property type="match status" value="1"/>
</dbReference>
<dbReference type="CDD" id="cd18786">
    <property type="entry name" value="SF1_C"/>
    <property type="match status" value="1"/>
</dbReference>
<dbReference type="FunFam" id="1.20.1280.50:FF:000011">
    <property type="entry name" value="F-box DNA helicase 1"/>
    <property type="match status" value="1"/>
</dbReference>
<dbReference type="FunFam" id="3.40.50.300:FF:000833">
    <property type="entry name" value="F-box DNA helicase 1"/>
    <property type="match status" value="1"/>
</dbReference>
<dbReference type="Gene3D" id="1.20.1280.50">
    <property type="match status" value="1"/>
</dbReference>
<dbReference type="Gene3D" id="3.40.50.300">
    <property type="entry name" value="P-loop containing nucleotide triphosphate hydrolases"/>
    <property type="match status" value="2"/>
</dbReference>
<dbReference type="InterPro" id="IPR014017">
    <property type="entry name" value="DNA_helicase_UvrD-like_C"/>
</dbReference>
<dbReference type="InterPro" id="IPR000212">
    <property type="entry name" value="DNA_helicase_UvrD/REP"/>
</dbReference>
<dbReference type="InterPro" id="IPR036047">
    <property type="entry name" value="F-box-like_dom_sf"/>
</dbReference>
<dbReference type="InterPro" id="IPR001810">
    <property type="entry name" value="F-box_dom"/>
</dbReference>
<dbReference type="InterPro" id="IPR027417">
    <property type="entry name" value="P-loop_NTPase"/>
</dbReference>
<dbReference type="InterPro" id="IPR014016">
    <property type="entry name" value="UvrD-like_ATP-bd"/>
</dbReference>
<dbReference type="PANTHER" id="PTHR11070:SF30">
    <property type="entry name" value="F-BOX DNA HELICASE 1"/>
    <property type="match status" value="1"/>
</dbReference>
<dbReference type="PANTHER" id="PTHR11070">
    <property type="entry name" value="UVRD / RECB / PCRA DNA HELICASE FAMILY MEMBER"/>
    <property type="match status" value="1"/>
</dbReference>
<dbReference type="Pfam" id="PF12937">
    <property type="entry name" value="F-box-like"/>
    <property type="match status" value="1"/>
</dbReference>
<dbReference type="Pfam" id="PF00580">
    <property type="entry name" value="UvrD-helicase"/>
    <property type="match status" value="1"/>
</dbReference>
<dbReference type="Pfam" id="PF13361">
    <property type="entry name" value="UvrD_C"/>
    <property type="match status" value="1"/>
</dbReference>
<dbReference type="SUPFAM" id="SSF81383">
    <property type="entry name" value="F-box domain"/>
    <property type="match status" value="1"/>
</dbReference>
<dbReference type="SUPFAM" id="SSF52540">
    <property type="entry name" value="P-loop containing nucleoside triphosphate hydrolases"/>
    <property type="match status" value="1"/>
</dbReference>
<dbReference type="PROSITE" id="PS50181">
    <property type="entry name" value="FBOX"/>
    <property type="match status" value="1"/>
</dbReference>
<feature type="chain" id="PRO_0000119901" description="F-box DNA helicase 1">
    <location>
        <begin position="1"/>
        <end position="1043"/>
    </location>
</feature>
<feature type="domain" description="F-box" evidence="1">
    <location>
        <begin position="138"/>
        <end position="184"/>
    </location>
</feature>
<feature type="domain" description="UvrD-like helicase ATP-binding" evidence="2">
    <location>
        <begin position="442"/>
        <end position="705"/>
    </location>
</feature>
<feature type="region of interest" description="Disordered" evidence="3">
    <location>
        <begin position="30"/>
        <end position="56"/>
    </location>
</feature>
<feature type="region of interest" description="Disordered" evidence="3">
    <location>
        <begin position="101"/>
        <end position="191"/>
    </location>
</feature>
<feature type="short sequence motif" description="PIP-box" evidence="11">
    <location>
        <begin position="57"/>
        <end position="64"/>
    </location>
</feature>
<feature type="short sequence motif" description="APIM motif" evidence="11">
    <location>
        <begin position="807"/>
        <end position="811"/>
    </location>
</feature>
<feature type="compositionally biased region" description="Basic and acidic residues" evidence="3">
    <location>
        <begin position="158"/>
        <end position="170"/>
    </location>
</feature>
<feature type="binding site" evidence="2">
    <location>
        <begin position="463"/>
        <end position="470"/>
    </location>
    <ligand>
        <name>ATP</name>
        <dbReference type="ChEBI" id="CHEBI:30616"/>
    </ligand>
</feature>
<feature type="modified residue" description="Phosphoserine" evidence="18">
    <location>
        <position position="124"/>
    </location>
</feature>
<feature type="splice variant" id="VSP_037942" description="In isoform 2." evidence="14">
    <original>M</original>
    <variation>MSYEVTSGCHWTCQVPESCDNGLHCAGPLGHLHRRCQRTSAHLLVFTEHAEM</variation>
    <location>
        <position position="1"/>
    </location>
</feature>
<feature type="mutagenesis site" description="No effect; when associated with A-583." evidence="7">
    <original>S</original>
    <variation>A</variation>
    <location>
        <position position="56"/>
    </location>
</feature>
<feature type="mutagenesis site" description="In PIPdeg3A; reduced ubiquitination." evidence="11">
    <original>IPEFF</original>
    <variation>APAAA</variation>
    <location>
        <begin position="60"/>
        <end position="64"/>
    </location>
</feature>
<feature type="mutagenesis site" description="Impaired localization to DNA damage sites in response to UV irradiation." evidence="11">
    <original>FF</original>
    <variation>AA</variation>
    <location>
        <begin position="63"/>
        <end position="64"/>
    </location>
</feature>
<feature type="mutagenesis site" description="Impairs formation of the SCF(FBH1) complex and impairs accumulation on single-stranded DNA." evidence="6 7">
    <original>LP</original>
    <variation>AA</variation>
    <location>
        <begin position="227"/>
        <end position="228"/>
    </location>
</feature>
<feature type="mutagenesis site" description="No effect; when associated with A-56." evidence="7">
    <original>S</original>
    <variation>A</variation>
    <location>
        <position position="583"/>
    </location>
</feature>
<feature type="mutagenesis site" description="Abolishes helicase activity and prevents accumulation on single-stranded DNA." evidence="6 7 13">
    <original>D</original>
    <variation>N</variation>
    <location>
        <position position="647"/>
    </location>
</feature>
<feature type="mutagenesis site" description="Impaired localization to DNA damage sites in response to UV irradiation." evidence="11">
    <original>KFI</original>
    <variation>AAA</variation>
    <location>
        <begin position="807"/>
        <end position="809"/>
    </location>
</feature>
<feature type="sequence conflict" description="In Ref. 3; BAC04535." evidence="16" ref="3">
    <original>W</original>
    <variation>R</variation>
    <location>
        <position position="234"/>
    </location>
</feature>
<feature type="sequence conflict" description="In Ref. 2; AAP97700 and 3; BAB55154." evidence="16" ref="2 3">
    <location>
        <position position="339"/>
    </location>
</feature>
<feature type="sequence conflict" description="In Ref. 2; AAP97705." evidence="16" ref="2">
    <original>K</original>
    <variation>N</variation>
    <location>
        <position position="425"/>
    </location>
</feature>
<feature type="sequence conflict" description="In Ref. 3; BAC04535." evidence="16" ref="3">
    <original>N</original>
    <variation>S</variation>
    <location>
        <position position="844"/>
    </location>
</feature>
<feature type="sequence conflict" description="In Ref. 2; AAP97700 and 3; BAB55154." evidence="16" ref="2 3">
    <original>P</original>
    <variation>L</variation>
    <location>
        <position position="984"/>
    </location>
</feature>
<feature type="helix" evidence="19">
    <location>
        <begin position="60"/>
        <end position="62"/>
    </location>
</feature>